<proteinExistence type="inferred from homology"/>
<dbReference type="EMBL" id="CP000826">
    <property type="protein sequence ID" value="ABV41252.1"/>
    <property type="molecule type" value="Genomic_DNA"/>
</dbReference>
<dbReference type="SMR" id="A8GDR2"/>
<dbReference type="STRING" id="399741.Spro_2151"/>
<dbReference type="KEGG" id="spe:Spro_2151"/>
<dbReference type="eggNOG" id="COG4139">
    <property type="taxonomic scope" value="Bacteria"/>
</dbReference>
<dbReference type="HOGENOM" id="CLU_013016_0_3_6"/>
<dbReference type="OrthoDB" id="9055647at2"/>
<dbReference type="GO" id="GO:0005886">
    <property type="term" value="C:plasma membrane"/>
    <property type="evidence" value="ECO:0007669"/>
    <property type="project" value="UniProtKB-SubCell"/>
</dbReference>
<dbReference type="GO" id="GO:0090482">
    <property type="term" value="F:vitamin transmembrane transporter activity"/>
    <property type="evidence" value="ECO:0007669"/>
    <property type="project" value="UniProtKB-UniRule"/>
</dbReference>
<dbReference type="GO" id="GO:0015889">
    <property type="term" value="P:cobalamin transport"/>
    <property type="evidence" value="ECO:0007669"/>
    <property type="project" value="UniProtKB-UniRule"/>
</dbReference>
<dbReference type="CDD" id="cd06550">
    <property type="entry name" value="TM_ABC_iron-siderophores_like"/>
    <property type="match status" value="1"/>
</dbReference>
<dbReference type="FunFam" id="1.10.3470.10:FF:000001">
    <property type="entry name" value="Vitamin B12 ABC transporter permease BtuC"/>
    <property type="match status" value="1"/>
</dbReference>
<dbReference type="Gene3D" id="1.10.3470.10">
    <property type="entry name" value="ABC transporter involved in vitamin B12 uptake, BtuC"/>
    <property type="match status" value="1"/>
</dbReference>
<dbReference type="HAMAP" id="MF_01004">
    <property type="entry name" value="BtuC"/>
    <property type="match status" value="1"/>
</dbReference>
<dbReference type="InterPro" id="IPR037294">
    <property type="entry name" value="ABC_BtuC-like"/>
</dbReference>
<dbReference type="InterPro" id="IPR023691">
    <property type="entry name" value="ABC_transptr_BtuC"/>
</dbReference>
<dbReference type="InterPro" id="IPR000522">
    <property type="entry name" value="ABC_transptr_permease_BtuC"/>
</dbReference>
<dbReference type="NCBIfam" id="NF003001">
    <property type="entry name" value="PRK03784.1"/>
    <property type="match status" value="1"/>
</dbReference>
<dbReference type="PANTHER" id="PTHR30472">
    <property type="entry name" value="FERRIC ENTEROBACTIN TRANSPORT SYSTEM PERMEASE PROTEIN"/>
    <property type="match status" value="1"/>
</dbReference>
<dbReference type="PANTHER" id="PTHR30472:SF29">
    <property type="entry name" value="VITAMIN B12 IMPORT SYSTEM PERMEASE PROTEIN BTUC"/>
    <property type="match status" value="1"/>
</dbReference>
<dbReference type="Pfam" id="PF01032">
    <property type="entry name" value="FecCD"/>
    <property type="match status" value="1"/>
</dbReference>
<dbReference type="SUPFAM" id="SSF81345">
    <property type="entry name" value="ABC transporter involved in vitamin B12 uptake, BtuC"/>
    <property type="match status" value="1"/>
</dbReference>
<keyword id="KW-0997">Cell inner membrane</keyword>
<keyword id="KW-1003">Cell membrane</keyword>
<keyword id="KW-0472">Membrane</keyword>
<keyword id="KW-0812">Transmembrane</keyword>
<keyword id="KW-1133">Transmembrane helix</keyword>
<keyword id="KW-0813">Transport</keyword>
<reference key="1">
    <citation type="submission" date="2007-09" db="EMBL/GenBank/DDBJ databases">
        <title>Complete sequence of chromosome of Serratia proteamaculans 568.</title>
        <authorList>
            <consortium name="US DOE Joint Genome Institute"/>
            <person name="Copeland A."/>
            <person name="Lucas S."/>
            <person name="Lapidus A."/>
            <person name="Barry K."/>
            <person name="Glavina del Rio T."/>
            <person name="Dalin E."/>
            <person name="Tice H."/>
            <person name="Pitluck S."/>
            <person name="Chain P."/>
            <person name="Malfatti S."/>
            <person name="Shin M."/>
            <person name="Vergez L."/>
            <person name="Schmutz J."/>
            <person name="Larimer F."/>
            <person name="Land M."/>
            <person name="Hauser L."/>
            <person name="Kyrpides N."/>
            <person name="Kim E."/>
            <person name="Taghavi S."/>
            <person name="Newman L."/>
            <person name="Vangronsveld J."/>
            <person name="van der Lelie D."/>
            <person name="Richardson P."/>
        </authorList>
    </citation>
    <scope>NUCLEOTIDE SEQUENCE [LARGE SCALE GENOMIC DNA]</scope>
    <source>
        <strain>568</strain>
    </source>
</reference>
<evidence type="ECO:0000255" key="1">
    <source>
        <dbReference type="HAMAP-Rule" id="MF_01004"/>
    </source>
</evidence>
<comment type="function">
    <text evidence="1">Part of the ABC transporter complex BtuCDF involved in vitamin B12 import. Involved in the translocation of the substrate across the membrane.</text>
</comment>
<comment type="subunit">
    <text evidence="1">The complex is composed of two ATP-binding proteins (BtuD), two transmembrane proteins (BtuC) and a solute-binding protein (BtuF).</text>
</comment>
<comment type="subcellular location">
    <subcellularLocation>
        <location evidence="1">Cell inner membrane</location>
        <topology evidence="1">Multi-pass membrane protein</topology>
    </subcellularLocation>
</comment>
<comment type="similarity">
    <text evidence="1">Belongs to the binding-protein-dependent transport system permease family. FecCD subfamily.</text>
</comment>
<protein>
    <recommendedName>
        <fullName evidence="1">Vitamin B12 import system permease protein BtuC</fullName>
    </recommendedName>
</protein>
<organism>
    <name type="scientific">Serratia proteamaculans (strain 568)</name>
    <dbReference type="NCBI Taxonomy" id="399741"/>
    <lineage>
        <taxon>Bacteria</taxon>
        <taxon>Pseudomonadati</taxon>
        <taxon>Pseudomonadota</taxon>
        <taxon>Gammaproteobacteria</taxon>
        <taxon>Enterobacterales</taxon>
        <taxon>Yersiniaceae</taxon>
        <taxon>Serratia</taxon>
    </lineage>
</organism>
<gene>
    <name evidence="1" type="primary">btuC</name>
    <name type="ordered locus">Spro_2151</name>
</gene>
<sequence length="335" mass="35957">MPASQTFTLLLHKQRHRDKRHLLLLTLGVAVAFVFSLSAGDVWLWPSQWSGEAAQLFVWQLRLPRALAVMLVGASLAVAGAVMQSLFENPLAEPGLLGVANGAGVALVLTVLLGNGLLPVAFMSLSAIAGALVMTFLLLSFARRKRLTNARLLLVGVALGIVCSAVMTWAVYFSSSLDLRQLMYWMMGGFGGVDWRQKWLVLALLPVLLWLCCQGKALNFMALGEVQARQLGLSLHLWRNLLVLAIGWLVGVSVALAGVIGFVGLVIPHMLRLSGLTNQRYLLPGCALAGAGVLLAADVVARITLLSAELPIGVVTATLGAPLFIWLLTRVKSLR</sequence>
<name>BTUC_SERP5</name>
<accession>A8GDR2</accession>
<feature type="chain" id="PRO_1000062776" description="Vitamin B12 import system permease protein BtuC">
    <location>
        <begin position="1"/>
        <end position="335"/>
    </location>
</feature>
<feature type="transmembrane region" description="Helical" evidence="1">
    <location>
        <begin position="22"/>
        <end position="42"/>
    </location>
</feature>
<feature type="transmembrane region" description="Helical" evidence="1">
    <location>
        <begin position="67"/>
        <end position="87"/>
    </location>
</feature>
<feature type="transmembrane region" description="Helical" evidence="1">
    <location>
        <begin position="94"/>
        <end position="114"/>
    </location>
</feature>
<feature type="transmembrane region" description="Helical" evidence="1">
    <location>
        <begin position="117"/>
        <end position="137"/>
    </location>
</feature>
<feature type="transmembrane region" description="Helical" evidence="1">
    <location>
        <begin position="153"/>
        <end position="173"/>
    </location>
</feature>
<feature type="transmembrane region" description="Helical" evidence="1">
    <location>
        <begin position="200"/>
        <end position="220"/>
    </location>
</feature>
<feature type="transmembrane region" description="Helical" evidence="1">
    <location>
        <begin position="243"/>
        <end position="263"/>
    </location>
</feature>
<feature type="transmembrane region" description="Helical" evidence="1">
    <location>
        <begin position="281"/>
        <end position="301"/>
    </location>
</feature>
<feature type="transmembrane region" description="Helical" evidence="1">
    <location>
        <begin position="308"/>
        <end position="328"/>
    </location>
</feature>